<proteinExistence type="evidence at protein level"/>
<name>SQUV_ECOLI</name>
<protein>
    <recommendedName>
        <fullName evidence="1 4">Sulfofructose kinase</fullName>
        <shortName evidence="1 4">SF kinase</shortName>
        <ecNumber evidence="1 2">2.7.1.184</ecNumber>
    </recommendedName>
</protein>
<gene>
    <name type="primary">yihV</name>
    <name type="ordered locus">b3883</name>
    <name type="ordered locus">JW5568</name>
</gene>
<organism>
    <name type="scientific">Escherichia coli (strain K12)</name>
    <dbReference type="NCBI Taxonomy" id="83333"/>
    <lineage>
        <taxon>Bacteria</taxon>
        <taxon>Pseudomonadati</taxon>
        <taxon>Pseudomonadota</taxon>
        <taxon>Gammaproteobacteria</taxon>
        <taxon>Enterobacterales</taxon>
        <taxon>Enterobacteriaceae</taxon>
        <taxon>Escherichia</taxon>
    </lineage>
</organism>
<keyword id="KW-0002">3D-structure</keyword>
<keyword id="KW-0067">ATP-binding</keyword>
<keyword id="KW-0119">Carbohydrate metabolism</keyword>
<keyword id="KW-0418">Kinase</keyword>
<keyword id="KW-0547">Nucleotide-binding</keyword>
<keyword id="KW-1185">Reference proteome</keyword>
<keyword id="KW-0808">Transferase</keyword>
<feature type="chain" id="PRO_0000080149" description="Sulfofructose kinase">
    <location>
        <begin position="1"/>
        <end position="298"/>
    </location>
</feature>
<feature type="binding site" evidence="1 3 7 9">
    <location>
        <position position="13"/>
    </location>
    <ligand>
        <name>6-deoxy-6-sulfo-D-fructose</name>
        <dbReference type="ChEBI" id="CHEBI:77133"/>
    </ligand>
</feature>
<feature type="binding site" evidence="1 3 7 9">
    <location>
        <position position="27"/>
    </location>
    <ligand>
        <name>6-deoxy-6-sulfo-D-fructose</name>
        <dbReference type="ChEBI" id="CHEBI:77133"/>
    </ligand>
</feature>
<feature type="binding site" evidence="1 3 7 9">
    <location>
        <position position="39"/>
    </location>
    <ligand>
        <name>6-deoxy-6-sulfo-D-fructose</name>
        <dbReference type="ChEBI" id="CHEBI:77133"/>
    </ligand>
</feature>
<feature type="binding site" evidence="1 3 7 9">
    <location>
        <position position="95"/>
    </location>
    <ligand>
        <name>6-deoxy-6-sulfo-D-fructose</name>
        <dbReference type="ChEBI" id="CHEBI:77133"/>
    </ligand>
</feature>
<feature type="binding site" evidence="1 3 7 9">
    <location>
        <position position="138"/>
    </location>
    <ligand>
        <name>6-deoxy-6-sulfo-D-fructose</name>
        <dbReference type="ChEBI" id="CHEBI:77133"/>
    </ligand>
</feature>
<feature type="binding site" evidence="1 6 7 8">
    <location>
        <position position="212"/>
    </location>
    <ligand>
        <name>ATP</name>
        <dbReference type="ChEBI" id="CHEBI:30616"/>
    </ligand>
</feature>
<feature type="binding site" evidence="1 6 7 8">
    <location>
        <position position="214"/>
    </location>
    <ligand>
        <name>ATP</name>
        <dbReference type="ChEBI" id="CHEBI:30616"/>
    </ligand>
</feature>
<feature type="binding site" evidence="1 6 7 8">
    <location>
        <position position="217"/>
    </location>
    <ligand>
        <name>ATP</name>
        <dbReference type="ChEBI" id="CHEBI:30616"/>
    </ligand>
</feature>
<feature type="binding site" evidence="1 6 7 8">
    <location>
        <position position="243"/>
    </location>
    <ligand>
        <name>ATP</name>
        <dbReference type="ChEBI" id="CHEBI:30616"/>
    </ligand>
</feature>
<feature type="binding site" evidence="1 3 7 9">
    <location>
        <position position="244"/>
    </location>
    <ligand>
        <name>6-deoxy-6-sulfo-D-fructose</name>
        <dbReference type="ChEBI" id="CHEBI:77133"/>
    </ligand>
</feature>
<feature type="strand" evidence="10">
    <location>
        <begin position="3"/>
        <end position="8"/>
    </location>
</feature>
<feature type="strand" evidence="10">
    <location>
        <begin position="11"/>
        <end position="17"/>
    </location>
</feature>
<feature type="strand" evidence="10">
    <location>
        <begin position="24"/>
        <end position="29"/>
    </location>
</feature>
<feature type="strand" evidence="10">
    <location>
        <begin position="31"/>
        <end position="38"/>
    </location>
</feature>
<feature type="helix" evidence="10">
    <location>
        <begin position="40"/>
        <end position="50"/>
    </location>
</feature>
<feature type="strand" evidence="10">
    <location>
        <begin position="54"/>
        <end position="58"/>
    </location>
</feature>
<feature type="strand" evidence="11">
    <location>
        <begin position="60"/>
        <end position="64"/>
    </location>
</feature>
<feature type="helix" evidence="10">
    <location>
        <begin position="65"/>
        <end position="76"/>
    </location>
</feature>
<feature type="strand" evidence="11">
    <location>
        <begin position="85"/>
        <end position="87"/>
    </location>
</feature>
<feature type="strand" evidence="10">
    <location>
        <begin position="93"/>
        <end position="99"/>
    </location>
</feature>
<feature type="strand" evidence="10">
    <location>
        <begin position="105"/>
        <end position="110"/>
    </location>
</feature>
<feature type="helix" evidence="10">
    <location>
        <begin position="120"/>
        <end position="124"/>
    </location>
</feature>
<feature type="helix" evidence="10">
    <location>
        <begin position="127"/>
        <end position="129"/>
    </location>
</feature>
<feature type="strand" evidence="10">
    <location>
        <begin position="131"/>
        <end position="136"/>
    </location>
</feature>
<feature type="helix" evidence="10">
    <location>
        <begin position="140"/>
        <end position="153"/>
    </location>
</feature>
<feature type="strand" evidence="10">
    <location>
        <begin position="156"/>
        <end position="161"/>
    </location>
</feature>
<feature type="helix" evidence="10">
    <location>
        <begin position="169"/>
        <end position="173"/>
    </location>
</feature>
<feature type="strand" evidence="10">
    <location>
        <begin position="176"/>
        <end position="181"/>
    </location>
</feature>
<feature type="helix" evidence="10">
    <location>
        <begin position="182"/>
        <end position="189"/>
    </location>
</feature>
<feature type="helix" evidence="10">
    <location>
        <begin position="194"/>
        <end position="202"/>
    </location>
</feature>
<feature type="strand" evidence="10">
    <location>
        <begin position="206"/>
        <end position="212"/>
    </location>
</feature>
<feature type="helix" evidence="10">
    <location>
        <begin position="214"/>
        <end position="216"/>
    </location>
</feature>
<feature type="strand" evidence="10">
    <location>
        <begin position="218"/>
        <end position="222"/>
    </location>
</feature>
<feature type="strand" evidence="10">
    <location>
        <begin position="225"/>
        <end position="229"/>
    </location>
</feature>
<feature type="helix" evidence="10">
    <location>
        <begin position="242"/>
        <end position="257"/>
    </location>
</feature>
<feature type="helix" evidence="10">
    <location>
        <begin position="260"/>
        <end position="274"/>
    </location>
</feature>
<feature type="turn" evidence="10">
    <location>
        <begin position="279"/>
        <end position="283"/>
    </location>
</feature>
<feature type="helix" evidence="10">
    <location>
        <begin position="287"/>
        <end position="295"/>
    </location>
</feature>
<dbReference type="EC" id="2.7.1.184" evidence="1 2"/>
<dbReference type="EMBL" id="L19201">
    <property type="protein sequence ID" value="AAB03016.1"/>
    <property type="status" value="ALT_INIT"/>
    <property type="molecule type" value="Genomic_DNA"/>
</dbReference>
<dbReference type="EMBL" id="U00096">
    <property type="protein sequence ID" value="AAD13445.2"/>
    <property type="molecule type" value="Genomic_DNA"/>
</dbReference>
<dbReference type="EMBL" id="AP009048">
    <property type="protein sequence ID" value="BAE77426.1"/>
    <property type="molecule type" value="Genomic_DNA"/>
</dbReference>
<dbReference type="PIR" id="S40827">
    <property type="entry name" value="S40827"/>
</dbReference>
<dbReference type="RefSeq" id="NP_418319.2">
    <property type="nucleotide sequence ID" value="NC_000913.3"/>
</dbReference>
<dbReference type="RefSeq" id="WP_000621656.1">
    <property type="nucleotide sequence ID" value="NZ_STEB01000017.1"/>
</dbReference>
<dbReference type="PDB" id="7AG6">
    <property type="method" value="X-ray"/>
    <property type="resolution" value="2.08 A"/>
    <property type="chains" value="A/B=1-298"/>
</dbReference>
<dbReference type="PDB" id="7AGH">
    <property type="method" value="X-ray"/>
    <property type="resolution" value="2.93 A"/>
    <property type="chains" value="A/B/C/D=1-298"/>
</dbReference>
<dbReference type="PDB" id="7AGK">
    <property type="method" value="X-ray"/>
    <property type="resolution" value="2.97 A"/>
    <property type="chains" value="A/B/C/D=1-298"/>
</dbReference>
<dbReference type="PDBsum" id="7AG6"/>
<dbReference type="PDBsum" id="7AGH"/>
<dbReference type="PDBsum" id="7AGK"/>
<dbReference type="SMR" id="P32143"/>
<dbReference type="BioGRID" id="4260966">
    <property type="interactions" value="12"/>
</dbReference>
<dbReference type="FunCoup" id="P32143">
    <property type="interactions" value="17"/>
</dbReference>
<dbReference type="STRING" id="511145.b3883"/>
<dbReference type="PaxDb" id="511145-b3883"/>
<dbReference type="EnsemblBacteria" id="AAD13445">
    <property type="protein sequence ID" value="AAD13445"/>
    <property type="gene ID" value="b3883"/>
</dbReference>
<dbReference type="GeneID" id="75204554"/>
<dbReference type="GeneID" id="948382"/>
<dbReference type="KEGG" id="ecj:JW5568"/>
<dbReference type="KEGG" id="eco:b3883"/>
<dbReference type="KEGG" id="ecoc:C3026_20990"/>
<dbReference type="PATRIC" id="fig|1411691.4.peg.2828"/>
<dbReference type="EchoBASE" id="EB1794"/>
<dbReference type="eggNOG" id="COG0524">
    <property type="taxonomic scope" value="Bacteria"/>
</dbReference>
<dbReference type="HOGENOM" id="CLU_027634_2_2_6"/>
<dbReference type="InParanoid" id="P32143"/>
<dbReference type="OMA" id="CSGMPPE"/>
<dbReference type="OrthoDB" id="9779730at2"/>
<dbReference type="PhylomeDB" id="P32143"/>
<dbReference type="BioCyc" id="EcoCyc:EG11848-MONOMER"/>
<dbReference type="BioCyc" id="MetaCyc:EG11848-MONOMER"/>
<dbReference type="PRO" id="PR:P32143"/>
<dbReference type="Proteomes" id="UP000000625">
    <property type="component" value="Chromosome"/>
</dbReference>
<dbReference type="GO" id="GO:0005829">
    <property type="term" value="C:cytosol"/>
    <property type="evidence" value="ECO:0000318"/>
    <property type="project" value="GO_Central"/>
</dbReference>
<dbReference type="GO" id="GO:0061594">
    <property type="term" value="F:6-deoxy-6-sulfofructose kinase activity"/>
    <property type="evidence" value="ECO:0000314"/>
    <property type="project" value="EcoCyc"/>
</dbReference>
<dbReference type="GO" id="GO:0005524">
    <property type="term" value="F:ATP binding"/>
    <property type="evidence" value="ECO:0007669"/>
    <property type="project" value="UniProtKB-KW"/>
</dbReference>
<dbReference type="GO" id="GO:0016301">
    <property type="term" value="F:kinase activity"/>
    <property type="evidence" value="ECO:0007669"/>
    <property type="project" value="UniProtKB-KW"/>
</dbReference>
<dbReference type="GO" id="GO:1902777">
    <property type="term" value="P:6-sulfoquinovose(1-) catabolic process"/>
    <property type="evidence" value="ECO:0000315"/>
    <property type="project" value="EcoCyc"/>
</dbReference>
<dbReference type="GO" id="GO:0061720">
    <property type="term" value="P:6-sulfoquinovose(1-) catabolic process to glycerone phosphate and 3-sulfolactaldehyde"/>
    <property type="evidence" value="ECO:0000315"/>
    <property type="project" value="EcoCyc"/>
</dbReference>
<dbReference type="GO" id="GO:0046835">
    <property type="term" value="P:carbohydrate phosphorylation"/>
    <property type="evidence" value="ECO:0000314"/>
    <property type="project" value="EcoCyc"/>
</dbReference>
<dbReference type="CDD" id="cd01945">
    <property type="entry name" value="ribokinase_group_B"/>
    <property type="match status" value="1"/>
</dbReference>
<dbReference type="FunFam" id="3.40.1190.20:FF:000016">
    <property type="entry name" value="Sulfofructose kinase"/>
    <property type="match status" value="1"/>
</dbReference>
<dbReference type="Gene3D" id="3.40.1190.20">
    <property type="match status" value="1"/>
</dbReference>
<dbReference type="HAMAP" id="MF_00999">
    <property type="entry name" value="SF_kinase"/>
    <property type="match status" value="1"/>
</dbReference>
<dbReference type="InterPro" id="IPR002173">
    <property type="entry name" value="Carboh/pur_kinase_PfkB_CS"/>
</dbReference>
<dbReference type="InterPro" id="IPR011611">
    <property type="entry name" value="PfkB_dom"/>
</dbReference>
<dbReference type="InterPro" id="IPR002139">
    <property type="entry name" value="Ribo/fructo_kinase"/>
</dbReference>
<dbReference type="InterPro" id="IPR029056">
    <property type="entry name" value="Ribokinase-like"/>
</dbReference>
<dbReference type="InterPro" id="IPR030877">
    <property type="entry name" value="SF_kinase"/>
</dbReference>
<dbReference type="PANTHER" id="PTHR10584">
    <property type="entry name" value="SUGAR KINASE"/>
    <property type="match status" value="1"/>
</dbReference>
<dbReference type="PANTHER" id="PTHR10584:SF157">
    <property type="entry name" value="SULFOFRUCTOSE KINASE"/>
    <property type="match status" value="1"/>
</dbReference>
<dbReference type="Pfam" id="PF00294">
    <property type="entry name" value="PfkB"/>
    <property type="match status" value="1"/>
</dbReference>
<dbReference type="PRINTS" id="PR00990">
    <property type="entry name" value="RIBOKINASE"/>
</dbReference>
<dbReference type="SUPFAM" id="SSF53613">
    <property type="entry name" value="Ribokinase-like"/>
    <property type="match status" value="1"/>
</dbReference>
<dbReference type="PROSITE" id="PS00584">
    <property type="entry name" value="PFKB_KINASES_2"/>
    <property type="match status" value="1"/>
</dbReference>
<comment type="function">
    <text evidence="2 3">Phosphorylates 6-deoxy-6-sulfo-D-fructose (SF) to 6-deoxy-6-sulfo-D-fructose 1-phosphate (SFP) (PubMed:24463506, PubMed:33791429). Cannot phosphorylate fructose 6-phosphate (PubMed:33791429).</text>
</comment>
<comment type="catalytic activity">
    <reaction evidence="1 2 3">
        <text>6-deoxy-6-sulfo-D-fructose + ATP = 6-deoxy-6-sulfo-D-fructose 1-phosphate + ADP + H(+)</text>
        <dbReference type="Rhea" id="RHEA:40443"/>
        <dbReference type="ChEBI" id="CHEBI:15378"/>
        <dbReference type="ChEBI" id="CHEBI:30616"/>
        <dbReference type="ChEBI" id="CHEBI:77133"/>
        <dbReference type="ChEBI" id="CHEBI:77134"/>
        <dbReference type="ChEBI" id="CHEBI:456216"/>
        <dbReference type="EC" id="2.7.1.184"/>
    </reaction>
    <physiologicalReaction direction="left-to-right" evidence="1 2 3">
        <dbReference type="Rhea" id="RHEA:40444"/>
    </physiologicalReaction>
</comment>
<comment type="activity regulation">
    <text evidence="3">Strongly inhibited by ADP (PubMed:33791429). Activated by sulfoquinovose (SQ), sulfolactaldehyde (SLA) and dihydroxyacetone phosphate (DHAP) (through effects on KM) and by fructose 6-phosphate (F6P), fructose bisphosphate (FBP), phosphoenolpyruvate (PEP) and citrate (through effects on kcat/KM) (PubMed:33791429).</text>
</comment>
<comment type="biophysicochemical properties">
    <kinetics>
        <KM evidence="3">1 mM for ATP</KM>
        <KM evidence="3">1.3 mM for 6-deoxy-6-sulfo-D-fructose</KM>
        <text evidence="3">kcat is 3.1 sec(-1) with ATP as substrate. kcat is 1.2 sec(-1) with 6-deoxy-6-sulfo-D-fructose as substrate.</text>
    </kinetics>
</comment>
<comment type="subunit">
    <text evidence="3">Homodimer.</text>
</comment>
<comment type="induction">
    <text evidence="2">Induced during growth with sulfoquinovose.</text>
</comment>
<comment type="disruption phenotype">
    <text evidence="2">Mutant fails to grow on sulfoquinovose as a sole carbon source.</text>
</comment>
<comment type="similarity">
    <text evidence="1 5">Belongs to the carbohydrate kinase PfkB family.</text>
</comment>
<comment type="sequence caution" evidence="5">
    <conflict type="erroneous initiation">
        <sequence resource="EMBL-CDS" id="AAB03016"/>
    </conflict>
    <text>Extended N-terminus.</text>
</comment>
<sequence length="298" mass="31728">MIRVACVGITVMDRIYYVEGLPTESGKYVARNYTEVGGGPAATAAVAAARLGAQVDFIGRVGDDDTGNSLLAELESWGVNTRYTKRYNQAKSSQSAIMVDTKGERIIINYPSPDLLPDAEWLEEIDFSQWDVVLADVRWHDGAKKAFTLARQAGVMTVLDGDITPQDISELVALSDHAAFSEPGLARLTGVKEMASALKQAQTLTNGHVYVTQGSAGCDWLENGGRQHQPAFKVDVVDTTGAGDVFHGALAVALATSGDLAESVRFASGVAALKCTRPGGRAGIPDCDQTRSFLSLFV</sequence>
<evidence type="ECO:0000255" key="1">
    <source>
        <dbReference type="HAMAP-Rule" id="MF_00999"/>
    </source>
</evidence>
<evidence type="ECO:0000269" key="2">
    <source>
    </source>
</evidence>
<evidence type="ECO:0000269" key="3">
    <source>
    </source>
</evidence>
<evidence type="ECO:0000303" key="4">
    <source>
    </source>
</evidence>
<evidence type="ECO:0000305" key="5"/>
<evidence type="ECO:0000305" key="6">
    <source>
    </source>
</evidence>
<evidence type="ECO:0007744" key="7">
    <source>
        <dbReference type="PDB" id="7AG6"/>
    </source>
</evidence>
<evidence type="ECO:0007744" key="8">
    <source>
        <dbReference type="PDB" id="7AGH"/>
    </source>
</evidence>
<evidence type="ECO:0007744" key="9">
    <source>
        <dbReference type="PDB" id="7AGK"/>
    </source>
</evidence>
<evidence type="ECO:0007829" key="10">
    <source>
        <dbReference type="PDB" id="7AG6"/>
    </source>
</evidence>
<evidence type="ECO:0007829" key="11">
    <source>
        <dbReference type="PDB" id="7AGH"/>
    </source>
</evidence>
<accession>P32143</accession>
<accession>Q2M8I0</accession>
<reference key="1">
    <citation type="journal article" date="1993" name="Nucleic Acids Res.">
        <title>Analysis of the Escherichia coli genome. III. DNA sequence of the region from 87.2 to 89.2 minutes.</title>
        <authorList>
            <person name="Plunkett G. III"/>
            <person name="Burland V."/>
            <person name="Daniels D.L."/>
            <person name="Blattner F.R."/>
        </authorList>
    </citation>
    <scope>NUCLEOTIDE SEQUENCE [LARGE SCALE GENOMIC DNA]</scope>
    <source>
        <strain>K12 / MG1655 / ATCC 47076</strain>
    </source>
</reference>
<reference key="2">
    <citation type="journal article" date="1997" name="Science">
        <title>The complete genome sequence of Escherichia coli K-12.</title>
        <authorList>
            <person name="Blattner F.R."/>
            <person name="Plunkett G. III"/>
            <person name="Bloch C.A."/>
            <person name="Perna N.T."/>
            <person name="Burland V."/>
            <person name="Riley M."/>
            <person name="Collado-Vides J."/>
            <person name="Glasner J.D."/>
            <person name="Rode C.K."/>
            <person name="Mayhew G.F."/>
            <person name="Gregor J."/>
            <person name="Davis N.W."/>
            <person name="Kirkpatrick H.A."/>
            <person name="Goeden M.A."/>
            <person name="Rose D.J."/>
            <person name="Mau B."/>
            <person name="Shao Y."/>
        </authorList>
    </citation>
    <scope>NUCLEOTIDE SEQUENCE [LARGE SCALE GENOMIC DNA]</scope>
    <source>
        <strain>K12 / MG1655 / ATCC 47076</strain>
    </source>
</reference>
<reference key="3">
    <citation type="journal article" date="2006" name="Mol. Syst. Biol.">
        <title>Highly accurate genome sequences of Escherichia coli K-12 strains MG1655 and W3110.</title>
        <authorList>
            <person name="Hayashi K."/>
            <person name="Morooka N."/>
            <person name="Yamamoto Y."/>
            <person name="Fujita K."/>
            <person name="Isono K."/>
            <person name="Choi S."/>
            <person name="Ohtsubo E."/>
            <person name="Baba T."/>
            <person name="Wanner B.L."/>
            <person name="Mori H."/>
            <person name="Horiuchi T."/>
        </authorList>
    </citation>
    <scope>NUCLEOTIDE SEQUENCE [LARGE SCALE GENOMIC DNA]</scope>
    <source>
        <strain>K12 / W3110 / ATCC 27325 / DSM 5911</strain>
    </source>
</reference>
<reference key="4">
    <citation type="journal article" date="2014" name="Nature">
        <title>Sulphoglycolysis in Escherichia coli K-12 closes a gap in the biogeochemical sulphur cycle.</title>
        <authorList>
            <person name="Denger K."/>
            <person name="Weiss M."/>
            <person name="Felux A.K."/>
            <person name="Schneider A."/>
            <person name="Mayer C."/>
            <person name="Spiteller D."/>
            <person name="Huhn T."/>
            <person name="Cook A.M."/>
            <person name="Schleheck D."/>
        </authorList>
    </citation>
    <scope>FUNCTION</scope>
    <scope>CATALYTIC ACTIVITY</scope>
    <scope>INDUCTION</scope>
    <scope>DISRUPTION PHENOTYPE</scope>
    <source>
        <strain>K12</strain>
    </source>
</reference>
<reference evidence="7 8 9" key="5">
    <citation type="journal article" date="2021" name="ACS Cent. Sci.">
        <title>Molecular Basis of Sulfosugar Selectivity in Sulfoglycolysis.</title>
        <authorList>
            <person name="Sharma M."/>
            <person name="Abayakoon P."/>
            <person name="Epa R."/>
            <person name="Jin Y."/>
            <person name="Lingford J.P."/>
            <person name="Shimada T."/>
            <person name="Nakano M."/>
            <person name="Mui J.W."/>
            <person name="Ishihama A."/>
            <person name="Goddard-Borger E.D."/>
            <person name="Davies G.J."/>
            <person name="Williams S.J."/>
        </authorList>
    </citation>
    <scope>X-RAY CRYSTALLOGRAPHY (2.08 ANGSTROMS) IN COMPLEXES WITH 6-DEOXY-6-SULFO-D-FRUCTOSE; 6-DEOXY-6-SULFO-D-FRUCTOSE 1-PHOSPHATE AND ATP ANALOGS</scope>
    <scope>FUNCTION</scope>
    <scope>CATALYTIC ACTIVITY</scope>
    <scope>ACTIVITY REGULATION</scope>
    <scope>BIOPHYSICOCHEMICAL PROPERTIES</scope>
    <scope>SUBUNIT</scope>
</reference>